<keyword id="KW-0007">Acetylation</keyword>
<keyword id="KW-0067">ATP-binding</keyword>
<keyword id="KW-0963">Cytoplasm</keyword>
<keyword id="KW-0418">Kinase</keyword>
<keyword id="KW-0460">Magnesium</keyword>
<keyword id="KW-0472">Membrane</keyword>
<keyword id="KW-0479">Metal-binding</keyword>
<keyword id="KW-0547">Nucleotide-binding</keyword>
<keyword id="KW-0597">Phosphoprotein</keyword>
<keyword id="KW-1185">Reference proteome</keyword>
<keyword id="KW-0723">Serine/threonine-protein kinase</keyword>
<keyword id="KW-0808">Transferase</keyword>
<keyword id="KW-0829">Tyrosine-protein kinase</keyword>
<accession>P36506</accession>
<accession>A0JN15</accession>
<evidence type="ECO:0000250" key="1"/>
<evidence type="ECO:0000250" key="2">
    <source>
        <dbReference type="UniProtKB" id="P36507"/>
    </source>
</evidence>
<evidence type="ECO:0000250" key="3">
    <source>
        <dbReference type="UniProtKB" id="Q02750"/>
    </source>
</evidence>
<evidence type="ECO:0000250" key="4">
    <source>
        <dbReference type="UniProtKB" id="Q63932"/>
    </source>
</evidence>
<evidence type="ECO:0000255" key="5">
    <source>
        <dbReference type="PROSITE-ProRule" id="PRU00159"/>
    </source>
</evidence>
<evidence type="ECO:0000255" key="6">
    <source>
        <dbReference type="PROSITE-ProRule" id="PRU10027"/>
    </source>
</evidence>
<evidence type="ECO:0000256" key="7">
    <source>
        <dbReference type="SAM" id="MobiDB-lite"/>
    </source>
</evidence>
<evidence type="ECO:0000305" key="8"/>
<comment type="function">
    <text evidence="2 4">Catalyzes the concomitant phosphorylation of a threonine and a tyrosine residue in a Thr-Glu-Tyr sequence located in MAP kinases. Activates the ERK1 and ERK2 MAP kinases (By similarity). Activates BRAF in a KSR1 or KSR2-dependent manner; by binding to KSR1 or KSR2 releases the inhibitory intramolecular interaction between KSR1 or KSR2 protein kinase and N-terminal domains which promotes KSR1 or KSR2-BRAF dimerization and BRAF activation (By similarity).</text>
</comment>
<comment type="catalytic activity">
    <reaction evidence="2">
        <text>L-seryl-[protein] + ATP = O-phospho-L-seryl-[protein] + ADP + H(+)</text>
        <dbReference type="Rhea" id="RHEA:17989"/>
        <dbReference type="Rhea" id="RHEA-COMP:9863"/>
        <dbReference type="Rhea" id="RHEA-COMP:11604"/>
        <dbReference type="ChEBI" id="CHEBI:15378"/>
        <dbReference type="ChEBI" id="CHEBI:29999"/>
        <dbReference type="ChEBI" id="CHEBI:30616"/>
        <dbReference type="ChEBI" id="CHEBI:83421"/>
        <dbReference type="ChEBI" id="CHEBI:456216"/>
        <dbReference type="EC" id="2.7.12.2"/>
    </reaction>
</comment>
<comment type="catalytic activity">
    <reaction evidence="2">
        <text>L-threonyl-[protein] + ATP = O-phospho-L-threonyl-[protein] + ADP + H(+)</text>
        <dbReference type="Rhea" id="RHEA:46608"/>
        <dbReference type="Rhea" id="RHEA-COMP:11060"/>
        <dbReference type="Rhea" id="RHEA-COMP:11605"/>
        <dbReference type="ChEBI" id="CHEBI:15378"/>
        <dbReference type="ChEBI" id="CHEBI:30013"/>
        <dbReference type="ChEBI" id="CHEBI:30616"/>
        <dbReference type="ChEBI" id="CHEBI:61977"/>
        <dbReference type="ChEBI" id="CHEBI:456216"/>
        <dbReference type="EC" id="2.7.12.2"/>
    </reaction>
</comment>
<comment type="catalytic activity">
    <reaction evidence="2">
        <text>L-tyrosyl-[protein] + ATP = O-phospho-L-tyrosyl-[protein] + ADP + H(+)</text>
        <dbReference type="Rhea" id="RHEA:10596"/>
        <dbReference type="Rhea" id="RHEA-COMP:10136"/>
        <dbReference type="Rhea" id="RHEA-COMP:20101"/>
        <dbReference type="ChEBI" id="CHEBI:15378"/>
        <dbReference type="ChEBI" id="CHEBI:30616"/>
        <dbReference type="ChEBI" id="CHEBI:46858"/>
        <dbReference type="ChEBI" id="CHEBI:61978"/>
        <dbReference type="ChEBI" id="CHEBI:456216"/>
        <dbReference type="EC" id="2.7.12.2"/>
    </reaction>
</comment>
<comment type="cofactor">
    <cofactor evidence="8">
        <name>Mg(2+)</name>
        <dbReference type="ChEBI" id="CHEBI:18420"/>
    </cofactor>
</comment>
<comment type="subunit">
    <text evidence="2 4">Interacts with MORG1 (By similarity). Interacts with SGK1 (By similarity). Interacts with KSR1. Interacts with KSR1 and BRAF; the interaction with KSR1 mediates KSR1-BRAF dimerization. Interacts with GLS (By similarity).</text>
</comment>
<comment type="subcellular location">
    <subcellularLocation>
        <location evidence="2">Cytoplasm</location>
    </subcellularLocation>
    <subcellularLocation>
        <location evidence="2">Membrane</location>
        <topology evidence="2">Peripheral membrane protein</topology>
    </subcellularLocation>
    <text evidence="2">Membrane localization is probably regulated by its interaction with KSR1.</text>
</comment>
<comment type="tissue specificity">
    <text>Expressed abundantly in the adult brain and muscle.</text>
</comment>
<comment type="PTM">
    <text evidence="1">MAPKK is itself dependent on Ser/Thr phosphorylation for activity catalyzed by MAP kinase kinase kinases (RAF or MEKK1). Phosphorylated by MAP2K1/MEK1 (By similarity).</text>
</comment>
<comment type="similarity">
    <text evidence="8">Belongs to the protein kinase superfamily. STE Ser/Thr protein kinase family. MAP kinase kinase subfamily.</text>
</comment>
<feature type="chain" id="PRO_0000086374" description="Dual specificity mitogen-activated protein kinase kinase 2">
    <location>
        <begin position="1"/>
        <end position="400"/>
    </location>
</feature>
<feature type="domain" description="Protein kinase" evidence="5">
    <location>
        <begin position="72"/>
        <end position="369"/>
    </location>
</feature>
<feature type="region of interest" description="Disordered" evidence="7">
    <location>
        <begin position="282"/>
        <end position="310"/>
    </location>
</feature>
<feature type="active site" description="Proton acceptor" evidence="5 6">
    <location>
        <position position="194"/>
    </location>
</feature>
<feature type="binding site" evidence="5">
    <location>
        <begin position="78"/>
        <end position="86"/>
    </location>
    <ligand>
        <name>ATP</name>
        <dbReference type="ChEBI" id="CHEBI:30616"/>
    </ligand>
</feature>
<feature type="binding site" evidence="5">
    <location>
        <position position="101"/>
    </location>
    <ligand>
        <name>ATP</name>
        <dbReference type="ChEBI" id="CHEBI:30616"/>
    </ligand>
</feature>
<feature type="site" description="Cleavage; by anthrax lethal factor" evidence="1">
    <location>
        <begin position="10"/>
        <end position="11"/>
    </location>
</feature>
<feature type="modified residue" description="N-acetylmethionine" evidence="2">
    <location>
        <position position="1"/>
    </location>
</feature>
<feature type="modified residue" description="Phosphoserine" evidence="2">
    <location>
        <position position="23"/>
    </location>
</feature>
<feature type="modified residue" description="Phosphoserine; by RAF" evidence="2">
    <location>
        <position position="222"/>
    </location>
</feature>
<feature type="modified residue" description="Phosphoserine; by RAF" evidence="2">
    <location>
        <position position="226"/>
    </location>
</feature>
<feature type="modified residue" description="Phosphoserine" evidence="2">
    <location>
        <position position="293"/>
    </location>
</feature>
<feature type="modified residue" description="Phosphoserine" evidence="2">
    <location>
        <position position="295"/>
    </location>
</feature>
<feature type="modified residue" description="Phosphoserine" evidence="3">
    <location>
        <position position="306"/>
    </location>
</feature>
<feature type="modified residue" description="Phosphothreonine" evidence="2">
    <location>
        <position position="394"/>
    </location>
</feature>
<feature type="modified residue" description="Phosphothreonine" evidence="2">
    <location>
        <position position="396"/>
    </location>
</feature>
<dbReference type="EC" id="2.7.12.2" evidence="2"/>
<dbReference type="EMBL" id="D14592">
    <property type="protein sequence ID" value="BAA03442.1"/>
    <property type="molecule type" value="mRNA"/>
</dbReference>
<dbReference type="EMBL" id="L14936">
    <property type="protein sequence ID" value="AAA41620.1"/>
    <property type="molecule type" value="mRNA"/>
</dbReference>
<dbReference type="EMBL" id="BC126084">
    <property type="protein sequence ID" value="AAI26085.1"/>
    <property type="molecule type" value="mRNA"/>
</dbReference>
<dbReference type="PIR" id="A48081">
    <property type="entry name" value="A48081"/>
</dbReference>
<dbReference type="RefSeq" id="NP_579817.1">
    <property type="nucleotide sequence ID" value="NM_133283.2"/>
</dbReference>
<dbReference type="SMR" id="P36506"/>
<dbReference type="BioGRID" id="248693">
    <property type="interactions" value="7"/>
</dbReference>
<dbReference type="FunCoup" id="P36506">
    <property type="interactions" value="3565"/>
</dbReference>
<dbReference type="IntAct" id="P36506">
    <property type="interactions" value="1"/>
</dbReference>
<dbReference type="STRING" id="10116.ENSRNOP00000027272"/>
<dbReference type="BindingDB" id="P36506"/>
<dbReference type="ChEMBL" id="CHEMBL3430876"/>
<dbReference type="GlyGen" id="P36506">
    <property type="glycosylation" value="2 sites, 1 O-linked glycan (1 site)"/>
</dbReference>
<dbReference type="iPTMnet" id="P36506"/>
<dbReference type="PhosphoSitePlus" id="P36506"/>
<dbReference type="jPOST" id="P36506"/>
<dbReference type="PaxDb" id="10116-ENSRNOP00000027272"/>
<dbReference type="GeneID" id="58960"/>
<dbReference type="KEGG" id="rno:58960"/>
<dbReference type="UCSC" id="RGD:61888">
    <property type="organism name" value="rat"/>
</dbReference>
<dbReference type="AGR" id="RGD:61888"/>
<dbReference type="CTD" id="5605"/>
<dbReference type="RGD" id="61888">
    <property type="gene designation" value="Map2k2"/>
</dbReference>
<dbReference type="VEuPathDB" id="HostDB:ENSRNOG00000020005"/>
<dbReference type="eggNOG" id="KOG0581">
    <property type="taxonomic scope" value="Eukaryota"/>
</dbReference>
<dbReference type="HOGENOM" id="CLU_000288_63_23_1"/>
<dbReference type="InParanoid" id="P36506"/>
<dbReference type="PhylomeDB" id="P36506"/>
<dbReference type="BRENDA" id="2.7.12.2">
    <property type="organism ID" value="5301"/>
</dbReference>
<dbReference type="Reactome" id="R-RNO-112411">
    <property type="pathway name" value="MAPK1 (ERK2) activation"/>
</dbReference>
<dbReference type="Reactome" id="R-RNO-170968">
    <property type="pathway name" value="Frs2-mediated activation"/>
</dbReference>
<dbReference type="Reactome" id="R-RNO-445144">
    <property type="pathway name" value="Signal transduction by L1"/>
</dbReference>
<dbReference type="Reactome" id="R-RNO-5673000">
    <property type="pathway name" value="RAF activation"/>
</dbReference>
<dbReference type="Reactome" id="R-RNO-5674135">
    <property type="pathway name" value="MAP2K and MAPK activation"/>
</dbReference>
<dbReference type="Reactome" id="R-RNO-5674499">
    <property type="pathway name" value="Negative feedback regulation of MAPK pathway"/>
</dbReference>
<dbReference type="PRO" id="PR:P36506"/>
<dbReference type="Proteomes" id="UP000002494">
    <property type="component" value="Chromosome 7"/>
</dbReference>
<dbReference type="Bgee" id="ENSRNOG00000020005">
    <property type="expression patterns" value="Expressed in jejunum and 19 other cell types or tissues"/>
</dbReference>
<dbReference type="GO" id="GO:0005938">
    <property type="term" value="C:cell cortex"/>
    <property type="evidence" value="ECO:0000314"/>
    <property type="project" value="RGD"/>
</dbReference>
<dbReference type="GO" id="GO:0005911">
    <property type="term" value="C:cell-cell junction"/>
    <property type="evidence" value="ECO:0000266"/>
    <property type="project" value="RGD"/>
</dbReference>
<dbReference type="GO" id="GO:0005737">
    <property type="term" value="C:cytoplasm"/>
    <property type="evidence" value="ECO:0000266"/>
    <property type="project" value="RGD"/>
</dbReference>
<dbReference type="GO" id="GO:0009898">
    <property type="term" value="C:cytoplasmic side of plasma membrane"/>
    <property type="evidence" value="ECO:0000266"/>
    <property type="project" value="RGD"/>
</dbReference>
<dbReference type="GO" id="GO:0005829">
    <property type="term" value="C:cytosol"/>
    <property type="evidence" value="ECO:0000304"/>
    <property type="project" value="UniProtKB"/>
</dbReference>
<dbReference type="GO" id="GO:0005769">
    <property type="term" value="C:early endosome"/>
    <property type="evidence" value="ECO:0000304"/>
    <property type="project" value="UniProtKB"/>
</dbReference>
<dbReference type="GO" id="GO:0005783">
    <property type="term" value="C:endoplasmic reticulum"/>
    <property type="evidence" value="ECO:0000266"/>
    <property type="project" value="RGD"/>
</dbReference>
<dbReference type="GO" id="GO:0005925">
    <property type="term" value="C:focal adhesion"/>
    <property type="evidence" value="ECO:0000304"/>
    <property type="project" value="UniProtKB"/>
</dbReference>
<dbReference type="GO" id="GO:0005794">
    <property type="term" value="C:Golgi apparatus"/>
    <property type="evidence" value="ECO:0000266"/>
    <property type="project" value="RGD"/>
</dbReference>
<dbReference type="GO" id="GO:0005770">
    <property type="term" value="C:late endosome"/>
    <property type="evidence" value="ECO:0000304"/>
    <property type="project" value="UniProtKB"/>
</dbReference>
<dbReference type="GO" id="GO:0005874">
    <property type="term" value="C:microtubule"/>
    <property type="evidence" value="ECO:0000266"/>
    <property type="project" value="RGD"/>
</dbReference>
<dbReference type="GO" id="GO:0005739">
    <property type="term" value="C:mitochondrion"/>
    <property type="evidence" value="ECO:0000304"/>
    <property type="project" value="UniProtKB"/>
</dbReference>
<dbReference type="GO" id="GO:0005634">
    <property type="term" value="C:nucleus"/>
    <property type="evidence" value="ECO:0000304"/>
    <property type="project" value="UniProtKB"/>
</dbReference>
<dbReference type="GO" id="GO:0048471">
    <property type="term" value="C:perinuclear region of cytoplasm"/>
    <property type="evidence" value="ECO:0000266"/>
    <property type="project" value="RGD"/>
</dbReference>
<dbReference type="GO" id="GO:0005524">
    <property type="term" value="F:ATP binding"/>
    <property type="evidence" value="ECO:0000314"/>
    <property type="project" value="RGD"/>
</dbReference>
<dbReference type="GO" id="GO:0004708">
    <property type="term" value="F:MAP kinase kinase activity"/>
    <property type="evidence" value="ECO:0000314"/>
    <property type="project" value="RGD"/>
</dbReference>
<dbReference type="GO" id="GO:0005078">
    <property type="term" value="F:MAP-kinase scaffold activity"/>
    <property type="evidence" value="ECO:0000266"/>
    <property type="project" value="RGD"/>
</dbReference>
<dbReference type="GO" id="GO:0046872">
    <property type="term" value="F:metal ion binding"/>
    <property type="evidence" value="ECO:0007669"/>
    <property type="project" value="UniProtKB-KW"/>
</dbReference>
<dbReference type="GO" id="GO:0060090">
    <property type="term" value="F:molecular adaptor activity"/>
    <property type="evidence" value="ECO:0000266"/>
    <property type="project" value="RGD"/>
</dbReference>
<dbReference type="GO" id="GO:0030165">
    <property type="term" value="F:PDZ domain binding"/>
    <property type="evidence" value="ECO:0000266"/>
    <property type="project" value="RGD"/>
</dbReference>
<dbReference type="GO" id="GO:0106310">
    <property type="term" value="F:protein serine kinase activity"/>
    <property type="evidence" value="ECO:0007669"/>
    <property type="project" value="RHEA"/>
</dbReference>
<dbReference type="GO" id="GO:0043539">
    <property type="term" value="F:protein serine/threonine kinase activator activity"/>
    <property type="evidence" value="ECO:0000266"/>
    <property type="project" value="RGD"/>
</dbReference>
<dbReference type="GO" id="GO:0004674">
    <property type="term" value="F:protein serine/threonine kinase activity"/>
    <property type="evidence" value="ECO:0007669"/>
    <property type="project" value="UniProtKB-KW"/>
</dbReference>
<dbReference type="GO" id="GO:0004712">
    <property type="term" value="F:protein serine/threonine/tyrosine kinase activity"/>
    <property type="evidence" value="ECO:0000304"/>
    <property type="project" value="UniProtKB"/>
</dbReference>
<dbReference type="GO" id="GO:0004713">
    <property type="term" value="F:protein tyrosine kinase activity"/>
    <property type="evidence" value="ECO:0007669"/>
    <property type="project" value="UniProtKB-KW"/>
</dbReference>
<dbReference type="GO" id="GO:0097110">
    <property type="term" value="F:scaffold protein binding"/>
    <property type="evidence" value="ECO:0000266"/>
    <property type="project" value="RGD"/>
</dbReference>
<dbReference type="GO" id="GO:0060502">
    <property type="term" value="P:epithelial cell proliferation involved in lung morphogenesis"/>
    <property type="evidence" value="ECO:0000266"/>
    <property type="project" value="RGD"/>
</dbReference>
<dbReference type="GO" id="GO:0038133">
    <property type="term" value="P:ERBB2-ERBB3 signaling pathway"/>
    <property type="evidence" value="ECO:0000266"/>
    <property type="project" value="RGD"/>
</dbReference>
<dbReference type="GO" id="GO:0070371">
    <property type="term" value="P:ERK1 and ERK2 cascade"/>
    <property type="evidence" value="ECO:0000266"/>
    <property type="project" value="RGD"/>
</dbReference>
<dbReference type="GO" id="GO:0060324">
    <property type="term" value="P:face development"/>
    <property type="evidence" value="ECO:0000266"/>
    <property type="project" value="RGD"/>
</dbReference>
<dbReference type="GO" id="GO:0007507">
    <property type="term" value="P:heart development"/>
    <property type="evidence" value="ECO:0000266"/>
    <property type="project" value="RGD"/>
</dbReference>
<dbReference type="GO" id="GO:0048009">
    <property type="term" value="P:insulin-like growth factor receptor signaling pathway"/>
    <property type="evidence" value="ECO:0000266"/>
    <property type="project" value="RGD"/>
</dbReference>
<dbReference type="GO" id="GO:0060425">
    <property type="term" value="P:lung morphogenesis"/>
    <property type="evidence" value="ECO:0000266"/>
    <property type="project" value="RGD"/>
</dbReference>
<dbReference type="GO" id="GO:0000165">
    <property type="term" value="P:MAPK cascade"/>
    <property type="evidence" value="ECO:0000266"/>
    <property type="project" value="RGD"/>
</dbReference>
<dbReference type="GO" id="GO:0042552">
    <property type="term" value="P:myelination"/>
    <property type="evidence" value="ECO:0000266"/>
    <property type="project" value="RGD"/>
</dbReference>
<dbReference type="GO" id="GO:0010629">
    <property type="term" value="P:negative regulation of gene expression"/>
    <property type="evidence" value="ECO:0000316"/>
    <property type="project" value="BHF-UCL"/>
</dbReference>
<dbReference type="GO" id="GO:0050772">
    <property type="term" value="P:positive regulation of axonogenesis"/>
    <property type="evidence" value="ECO:0000266"/>
    <property type="project" value="RGD"/>
</dbReference>
<dbReference type="GO" id="GO:2000147">
    <property type="term" value="P:positive regulation of cell motility"/>
    <property type="evidence" value="ECO:0000266"/>
    <property type="project" value="RGD"/>
</dbReference>
<dbReference type="GO" id="GO:0045893">
    <property type="term" value="P:positive regulation of DNA-templated transcription"/>
    <property type="evidence" value="ECO:0000266"/>
    <property type="project" value="RGD"/>
</dbReference>
<dbReference type="GO" id="GO:0010628">
    <property type="term" value="P:positive regulation of gene expression"/>
    <property type="evidence" value="ECO:0000266"/>
    <property type="project" value="RGD"/>
</dbReference>
<dbReference type="GO" id="GO:0048679">
    <property type="term" value="P:regulation of axon regeneration"/>
    <property type="evidence" value="ECO:0000266"/>
    <property type="project" value="RGD"/>
</dbReference>
<dbReference type="GO" id="GO:2000641">
    <property type="term" value="P:regulation of early endosome to late endosome transport"/>
    <property type="evidence" value="ECO:0000304"/>
    <property type="project" value="UniProtKB"/>
</dbReference>
<dbReference type="GO" id="GO:0090170">
    <property type="term" value="P:regulation of Golgi inheritance"/>
    <property type="evidence" value="ECO:0000304"/>
    <property type="project" value="UniProtKB"/>
</dbReference>
<dbReference type="GO" id="GO:0032872">
    <property type="term" value="P:regulation of stress-activated MAPK cascade"/>
    <property type="evidence" value="ECO:0000304"/>
    <property type="project" value="UniProtKB"/>
</dbReference>
<dbReference type="GO" id="GO:0002931">
    <property type="term" value="P:response to ischemia"/>
    <property type="evidence" value="ECO:0000314"/>
    <property type="project" value="RGD"/>
</dbReference>
<dbReference type="GO" id="GO:0014044">
    <property type="term" value="P:Schwann cell development"/>
    <property type="evidence" value="ECO:0000266"/>
    <property type="project" value="RGD"/>
</dbReference>
<dbReference type="GO" id="GO:0048538">
    <property type="term" value="P:thymus development"/>
    <property type="evidence" value="ECO:0000266"/>
    <property type="project" value="RGD"/>
</dbReference>
<dbReference type="GO" id="GO:0030878">
    <property type="term" value="P:thyroid gland development"/>
    <property type="evidence" value="ECO:0000266"/>
    <property type="project" value="RGD"/>
</dbReference>
<dbReference type="GO" id="GO:0060440">
    <property type="term" value="P:trachea formation"/>
    <property type="evidence" value="ECO:0000266"/>
    <property type="project" value="RGD"/>
</dbReference>
<dbReference type="CDD" id="cd06615">
    <property type="entry name" value="PKc_MEK"/>
    <property type="match status" value="1"/>
</dbReference>
<dbReference type="FunFam" id="1.10.510.10:FF:000115">
    <property type="entry name" value="Dual specificity mitogen-activated protein kinase kinase 1"/>
    <property type="match status" value="1"/>
</dbReference>
<dbReference type="FunFam" id="3.30.200.20:FF:000100">
    <property type="entry name" value="Dual specificity mitogen-activated protein kinase kinase 1"/>
    <property type="match status" value="1"/>
</dbReference>
<dbReference type="Gene3D" id="3.30.200.20">
    <property type="entry name" value="Phosphorylase Kinase, domain 1"/>
    <property type="match status" value="1"/>
</dbReference>
<dbReference type="Gene3D" id="1.10.510.10">
    <property type="entry name" value="Transferase(Phosphotransferase) domain 1"/>
    <property type="match status" value="1"/>
</dbReference>
<dbReference type="InterPro" id="IPR011009">
    <property type="entry name" value="Kinase-like_dom_sf"/>
</dbReference>
<dbReference type="InterPro" id="IPR050915">
    <property type="entry name" value="MAP_kinase_kinase"/>
</dbReference>
<dbReference type="InterPro" id="IPR000719">
    <property type="entry name" value="Prot_kinase_dom"/>
</dbReference>
<dbReference type="InterPro" id="IPR017441">
    <property type="entry name" value="Protein_kinase_ATP_BS"/>
</dbReference>
<dbReference type="InterPro" id="IPR008271">
    <property type="entry name" value="Ser/Thr_kinase_AS"/>
</dbReference>
<dbReference type="PANTHER" id="PTHR47448">
    <property type="entry name" value="DUAL SPECIFICITY MITOGEN-ACTIVATED PROTEIN KINASE KINASE DSOR1-LIKE PROTEIN"/>
    <property type="match status" value="1"/>
</dbReference>
<dbReference type="PANTHER" id="PTHR47448:SF3">
    <property type="entry name" value="MITOGEN-ACTIVATED PROTEIN KINASE KINASE 2"/>
    <property type="match status" value="1"/>
</dbReference>
<dbReference type="Pfam" id="PF00069">
    <property type="entry name" value="Pkinase"/>
    <property type="match status" value="1"/>
</dbReference>
<dbReference type="SMART" id="SM00220">
    <property type="entry name" value="S_TKc"/>
    <property type="match status" value="1"/>
</dbReference>
<dbReference type="SUPFAM" id="SSF56112">
    <property type="entry name" value="Protein kinase-like (PK-like)"/>
    <property type="match status" value="1"/>
</dbReference>
<dbReference type="PROSITE" id="PS00107">
    <property type="entry name" value="PROTEIN_KINASE_ATP"/>
    <property type="match status" value="1"/>
</dbReference>
<dbReference type="PROSITE" id="PS50011">
    <property type="entry name" value="PROTEIN_KINASE_DOM"/>
    <property type="match status" value="1"/>
</dbReference>
<dbReference type="PROSITE" id="PS00108">
    <property type="entry name" value="PROTEIN_KINASE_ST"/>
    <property type="match status" value="1"/>
</dbReference>
<proteinExistence type="evidence at protein level"/>
<sequence length="400" mass="44282">MLARRKPVLPALTINPTIAEGPSPTSEGASEAHLVDLQKKLEELDLDEQQRKRLEAFLTQKAKVGELKDDDFERISELGAGNGGVVTKARHRPSGLIMARKLIHLEIKPAVRNQIIRELQVLHECNSPYIVGFYGAFYSDGEISICMEHMDGGSLDQVLKEAKRIPEDILGKVSIAVLRGLAYLREKHQIMHRDVKPSNILVNSRGEIKLCDFGVSGQLIDSMANSFVGTRSYMSPERLQGTHYSVQSDIWSMGLSLVELAIGRYPIPPPDAKELEASFGRPVVDGADGEPHSVSPRPRPPGRPISGHGMDSRPAMAIFELLDYIVNEPPPKLPSGVFSSDFQEFVNKCLIKNPAERADLKLLTNHAFIKRSEGEDVDFAGWLCRTLRLKQPSTPTRTAV</sequence>
<organism>
    <name type="scientific">Rattus norvegicus</name>
    <name type="common">Rat</name>
    <dbReference type="NCBI Taxonomy" id="10116"/>
    <lineage>
        <taxon>Eukaryota</taxon>
        <taxon>Metazoa</taxon>
        <taxon>Chordata</taxon>
        <taxon>Craniata</taxon>
        <taxon>Vertebrata</taxon>
        <taxon>Euteleostomi</taxon>
        <taxon>Mammalia</taxon>
        <taxon>Eutheria</taxon>
        <taxon>Euarchontoglires</taxon>
        <taxon>Glires</taxon>
        <taxon>Rodentia</taxon>
        <taxon>Myomorpha</taxon>
        <taxon>Muroidea</taxon>
        <taxon>Muridae</taxon>
        <taxon>Murinae</taxon>
        <taxon>Rattus</taxon>
    </lineage>
</organism>
<gene>
    <name type="primary">Map2k2</name>
    <name type="synonym">Mek2</name>
    <name type="synonym">Mkk2</name>
    <name type="synonym">Prkmk2</name>
</gene>
<name>MP2K2_RAT</name>
<reference key="1">
    <citation type="journal article" date="1993" name="FEBS Lett.">
        <title>Isolation of two members of the rat MAP kinase kinase gene family.</title>
        <authorList>
            <person name="Otsu M."/>
            <person name="Terada Y."/>
            <person name="Okayama H."/>
        </authorList>
    </citation>
    <scope>NUCLEOTIDE SEQUENCE [MRNA]</scope>
</reference>
<reference key="2">
    <citation type="journal article" date="1993" name="FEBS Lett.">
        <authorList>
            <person name="Otsu M."/>
            <person name="Terada Y."/>
            <person name="Okayama H."/>
        </authorList>
    </citation>
    <scope>ERRATUM OF PUBMED:8462694</scope>
</reference>
<reference key="3">
    <citation type="journal article" date="1993" name="Mol. Cell. Biol.">
        <title>Identification and characterization of a new mammalian mitogen-activated protein kinase kinase, MKK2.</title>
        <authorList>
            <person name="Wu J."/>
            <person name="Harrison J.K."/>
            <person name="Dent P."/>
            <person name="Lynch K.R."/>
            <person name="Weber M.J."/>
            <person name="Sturgill T.W."/>
        </authorList>
    </citation>
    <scope>NUCLEOTIDE SEQUENCE [MRNA]</scope>
</reference>
<reference key="4">
    <citation type="journal article" date="2004" name="Genome Res.">
        <title>The status, quality, and expansion of the NIH full-length cDNA project: the Mammalian Gene Collection (MGC).</title>
        <authorList>
            <consortium name="The MGC Project Team"/>
        </authorList>
    </citation>
    <scope>NUCLEOTIDE SEQUENCE [LARGE SCALE MRNA]</scope>
    <source>
        <tissue>Liver</tissue>
    </source>
</reference>
<reference key="5">
    <citation type="journal article" date="2012" name="Nat. Commun.">
        <title>Quantitative maps of protein phosphorylation sites across 14 different rat organs and tissues.</title>
        <authorList>
            <person name="Lundby A."/>
            <person name="Secher A."/>
            <person name="Lage K."/>
            <person name="Nordsborg N.B."/>
            <person name="Dmytriyev A."/>
            <person name="Lundby C."/>
            <person name="Olsen J.V."/>
        </authorList>
    </citation>
    <scope>IDENTIFICATION BY MASS SPECTROMETRY [LARGE SCALE ANALYSIS]</scope>
</reference>
<protein>
    <recommendedName>
        <fullName>Dual specificity mitogen-activated protein kinase kinase 2</fullName>
        <shortName>MAP kinase kinase 2</shortName>
        <shortName>MAPKK 2</shortName>
        <ecNumber evidence="2">2.7.12.2</ecNumber>
    </recommendedName>
    <alternativeName>
        <fullName>ERK activator kinase 2</fullName>
    </alternativeName>
    <alternativeName>
        <fullName>MAPK/ERK kinase 2</fullName>
        <shortName>MEK 2</shortName>
    </alternativeName>
</protein>